<protein>
    <recommendedName>
        <fullName evidence="1">ATPase ASNA1 homolog</fullName>
        <ecNumber evidence="1">3.6.-.-</ecNumber>
    </recommendedName>
    <alternativeName>
        <fullName evidence="1">Arsenical pump-driving ATPase homolog</fullName>
    </alternativeName>
    <alternativeName>
        <fullName evidence="1">Arsenite-stimulated ATPase</fullName>
    </alternativeName>
</protein>
<sequence length="336" mass="37477">MVDNLAPLEPSLQNLVDQESLKWIFVGGKGGVGKTTCSSSLAVQLAKVRESVLIISTDPAHNISDAFDQKFTKVPTKVNGFNNLFAMEIDPNAGLSELPEEYFDGENEALRVSKGVMQEMINALPGIDEAMSYAEVMKLVKGMNFSVVVFDTAPTGHTLRLIAFPQVVEKGLGKLLRLKMKLAPLLTQFVAMLGMADVNADTLSQKLDDMLRVITQVNEQFKNPDQTTFVCVCIAEFFSLYETERLVQELTKCGIDVHNIIVNQLLFLEKSHNSCSMCASRFKIQEKYLDQIADLYEDFHVTKLPLLEKEVRGPESIKAFSENLMIPFNPKETSNK</sequence>
<reference key="1">
    <citation type="journal article" date="2007" name="Nature">
        <title>Evolution of genes and genomes on the Drosophila phylogeny.</title>
        <authorList>
            <consortium name="Drosophila 12 genomes consortium"/>
        </authorList>
    </citation>
    <scope>NUCLEOTIDE SEQUENCE [LARGE SCALE GENOMIC DNA]</scope>
    <source>
        <strain>Tucson 15287-2541.00</strain>
    </source>
</reference>
<name>ASNA_DROGR</name>
<evidence type="ECO:0000255" key="1">
    <source>
        <dbReference type="HAMAP-Rule" id="MF_03112"/>
    </source>
</evidence>
<feature type="chain" id="PRO_0000388150" description="ATPase ASNA1 homolog">
    <location>
        <begin position="1"/>
        <end position="336"/>
    </location>
</feature>
<feature type="active site" evidence="1">
    <location>
        <position position="58"/>
    </location>
</feature>
<feature type="binding site" evidence="1">
    <location>
        <begin position="29"/>
        <end position="36"/>
    </location>
    <ligand>
        <name>ATP</name>
        <dbReference type="ChEBI" id="CHEBI:30616"/>
    </ligand>
</feature>
<feature type="binding site" evidence="1">
    <location>
        <position position="236"/>
    </location>
    <ligand>
        <name>ATP</name>
        <dbReference type="ChEBI" id="CHEBI:30616"/>
    </ligand>
</feature>
<feature type="binding site" evidence="1">
    <location>
        <position position="263"/>
    </location>
    <ligand>
        <name>ATP</name>
        <dbReference type="ChEBI" id="CHEBI:30616"/>
    </ligand>
</feature>
<feature type="binding site" evidence="1">
    <location>
        <position position="275"/>
    </location>
    <ligand>
        <name>Zn(2+)</name>
        <dbReference type="ChEBI" id="CHEBI:29105"/>
        <note>ligand shared between dimeric partners</note>
    </ligand>
</feature>
<feature type="binding site" evidence="1">
    <location>
        <position position="278"/>
    </location>
    <ligand>
        <name>Zn(2+)</name>
        <dbReference type="ChEBI" id="CHEBI:29105"/>
        <note>ligand shared between dimeric partners</note>
    </ligand>
</feature>
<proteinExistence type="inferred from homology"/>
<organism>
    <name type="scientific">Drosophila grimshawi</name>
    <name type="common">Hawaiian fruit fly</name>
    <name type="synonym">Idiomyia grimshawi</name>
    <dbReference type="NCBI Taxonomy" id="7222"/>
    <lineage>
        <taxon>Eukaryota</taxon>
        <taxon>Metazoa</taxon>
        <taxon>Ecdysozoa</taxon>
        <taxon>Arthropoda</taxon>
        <taxon>Hexapoda</taxon>
        <taxon>Insecta</taxon>
        <taxon>Pterygota</taxon>
        <taxon>Neoptera</taxon>
        <taxon>Endopterygota</taxon>
        <taxon>Diptera</taxon>
        <taxon>Brachycera</taxon>
        <taxon>Muscomorpha</taxon>
        <taxon>Ephydroidea</taxon>
        <taxon>Drosophilidae</taxon>
        <taxon>Drosophila</taxon>
        <taxon>Hawaiian Drosophila</taxon>
    </lineage>
</organism>
<gene>
    <name type="ORF">GH21552</name>
</gene>
<keyword id="KW-0067">ATP-binding</keyword>
<keyword id="KW-0963">Cytoplasm</keyword>
<keyword id="KW-0256">Endoplasmic reticulum</keyword>
<keyword id="KW-0378">Hydrolase</keyword>
<keyword id="KW-0479">Metal-binding</keyword>
<keyword id="KW-0547">Nucleotide-binding</keyword>
<keyword id="KW-1185">Reference proteome</keyword>
<keyword id="KW-0813">Transport</keyword>
<keyword id="KW-0862">Zinc</keyword>
<accession>B4J4F6</accession>
<dbReference type="EC" id="3.6.-.-" evidence="1"/>
<dbReference type="EMBL" id="CH916367">
    <property type="protein sequence ID" value="EDW01638.1"/>
    <property type="molecule type" value="Genomic_DNA"/>
</dbReference>
<dbReference type="SMR" id="B4J4F6"/>
<dbReference type="FunCoup" id="B4J4F6">
    <property type="interactions" value="2053"/>
</dbReference>
<dbReference type="STRING" id="7222.B4J4F6"/>
<dbReference type="EnsemblMetazoa" id="FBtr0156966">
    <property type="protein sequence ID" value="FBpp0155458"/>
    <property type="gene ID" value="FBgn0129014"/>
</dbReference>
<dbReference type="EnsemblMetazoa" id="XM_001986735.2">
    <property type="protein sequence ID" value="XP_001986771.1"/>
    <property type="gene ID" value="LOC6561070"/>
</dbReference>
<dbReference type="GeneID" id="6561070"/>
<dbReference type="KEGG" id="dgr:6561070"/>
<dbReference type="eggNOG" id="KOG2825">
    <property type="taxonomic scope" value="Eukaryota"/>
</dbReference>
<dbReference type="HOGENOM" id="CLU_040761_0_0_1"/>
<dbReference type="InParanoid" id="B4J4F6"/>
<dbReference type="OMA" id="MDAPYEF"/>
<dbReference type="OrthoDB" id="1770at2759"/>
<dbReference type="PhylomeDB" id="B4J4F6"/>
<dbReference type="Proteomes" id="UP000001070">
    <property type="component" value="Unassembled WGS sequence"/>
</dbReference>
<dbReference type="GO" id="GO:0043529">
    <property type="term" value="C:GET complex"/>
    <property type="evidence" value="ECO:0007669"/>
    <property type="project" value="TreeGrafter"/>
</dbReference>
<dbReference type="GO" id="GO:0005524">
    <property type="term" value="F:ATP binding"/>
    <property type="evidence" value="ECO:0007669"/>
    <property type="project" value="UniProtKB-UniRule"/>
</dbReference>
<dbReference type="GO" id="GO:0016887">
    <property type="term" value="F:ATP hydrolysis activity"/>
    <property type="evidence" value="ECO:0007669"/>
    <property type="project" value="InterPro"/>
</dbReference>
<dbReference type="GO" id="GO:0046872">
    <property type="term" value="F:metal ion binding"/>
    <property type="evidence" value="ECO:0007669"/>
    <property type="project" value="UniProtKB-KW"/>
</dbReference>
<dbReference type="GO" id="GO:0071816">
    <property type="term" value="P:tail-anchored membrane protein insertion into ER membrane"/>
    <property type="evidence" value="ECO:0007669"/>
    <property type="project" value="TreeGrafter"/>
</dbReference>
<dbReference type="CDD" id="cd02035">
    <property type="entry name" value="ArsA"/>
    <property type="match status" value="1"/>
</dbReference>
<dbReference type="FunFam" id="3.40.50.300:FF:000235">
    <property type="entry name" value="ATPase ASNA1"/>
    <property type="match status" value="1"/>
</dbReference>
<dbReference type="Gene3D" id="3.40.50.300">
    <property type="entry name" value="P-loop containing nucleotide triphosphate hydrolases"/>
    <property type="match status" value="1"/>
</dbReference>
<dbReference type="HAMAP" id="MF_03112">
    <property type="entry name" value="Asna1_Get3"/>
    <property type="match status" value="1"/>
</dbReference>
<dbReference type="InterPro" id="IPR025723">
    <property type="entry name" value="Anion-transp_ATPase-like_dom"/>
</dbReference>
<dbReference type="InterPro" id="IPR016300">
    <property type="entry name" value="ATPase_ArsA/GET3"/>
</dbReference>
<dbReference type="InterPro" id="IPR027542">
    <property type="entry name" value="ATPase_ArsA/GET3_euk"/>
</dbReference>
<dbReference type="InterPro" id="IPR027417">
    <property type="entry name" value="P-loop_NTPase"/>
</dbReference>
<dbReference type="NCBIfam" id="TIGR00345">
    <property type="entry name" value="GET3_arsA_TRC40"/>
    <property type="match status" value="1"/>
</dbReference>
<dbReference type="PANTHER" id="PTHR10803">
    <property type="entry name" value="ARSENICAL PUMP-DRIVING ATPASE ARSENITE-TRANSLOCATING ATPASE"/>
    <property type="match status" value="1"/>
</dbReference>
<dbReference type="PANTHER" id="PTHR10803:SF3">
    <property type="entry name" value="ATPASE GET3"/>
    <property type="match status" value="1"/>
</dbReference>
<dbReference type="Pfam" id="PF02374">
    <property type="entry name" value="ArsA_ATPase"/>
    <property type="match status" value="1"/>
</dbReference>
<dbReference type="SUPFAM" id="SSF52540">
    <property type="entry name" value="P-loop containing nucleoside triphosphate hydrolases"/>
    <property type="match status" value="1"/>
</dbReference>
<comment type="function">
    <text evidence="1">ATPase required for the post-translational delivery of tail-anchored (TA) proteins to the endoplasmic reticulum. Recognizes and selectively binds the transmembrane domain of TA proteins in the cytosol. This complex then targets to the endoplasmic reticulum by membrane-bound receptors, where the tail-anchored protein is released for insertion. This process is regulated by ATP binding and hydrolysis. ATP binding drives the homodimer towards the closed dimer state, facilitating recognition of newly synthesized TA membrane proteins. ATP hydrolysis is required for insertion. Subsequently, the homodimer reverts towards the open dimer state, lowering its affinity for the membrane-bound receptor, and returning it to the cytosol to initiate a new round of targeting.</text>
</comment>
<comment type="subunit">
    <text evidence="1">Homodimer.</text>
</comment>
<comment type="subcellular location">
    <subcellularLocation>
        <location evidence="1">Cytoplasm</location>
    </subcellularLocation>
    <subcellularLocation>
        <location evidence="1">Endoplasmic reticulum</location>
    </subcellularLocation>
</comment>
<comment type="similarity">
    <text evidence="1">Belongs to the arsA ATPase family.</text>
</comment>